<comment type="function">
    <text evidence="1">Key regulator for male fertility expressed transiently in round spermatids where it recruits IZUMO1 at the endoplasmic reticulum (ER) membrane and coordinates the oolemmal binding multimeric complex (IZUMO1 complex) assembly. Upon complete assembly of the IZUMO1 complex, its ER retention is released, facilitating IZUMO1 complex export to the acrosome. Through the interaction with SPPL2C, inhibits its intramembrane protease activity directly accessing the catalytic center of an I-CLiP.</text>
</comment>
<comment type="subunit">
    <text evidence="1">Interacts with SPPL2C (via active sites); the interaction stabilizes FREY1 protein and inhibits SPPL2C proteolytic activity. Interacts with IZUMO1; the interaction retains IZUMO1 at the endoplasmic reticulum membrane and coordinates IZUMO1 complex assembly.</text>
</comment>
<comment type="subcellular location">
    <subcellularLocation>
        <location evidence="1">Endoplasmic reticulum membrane</location>
        <topology evidence="1">Single-pass type II membrane protein</topology>
    </subcellularLocation>
</comment>
<accession>C9JXX5</accession>
<sequence>MVLAMLGALHPRAGLSLFLHLILAVALLRSQPLRSQRSVPEAFSAPLELSQPLSGLVDDYGILPKHPRPRGPRPLLSRAQQRKRDGPDLAEYYYDAHL</sequence>
<proteinExistence type="inferred from homology"/>
<organism>
    <name type="scientific">Homo sapiens</name>
    <name type="common">Human</name>
    <dbReference type="NCBI Taxonomy" id="9606"/>
    <lineage>
        <taxon>Eukaryota</taxon>
        <taxon>Metazoa</taxon>
        <taxon>Chordata</taxon>
        <taxon>Craniata</taxon>
        <taxon>Vertebrata</taxon>
        <taxon>Euteleostomi</taxon>
        <taxon>Mammalia</taxon>
        <taxon>Eutheria</taxon>
        <taxon>Euarchontoglires</taxon>
        <taxon>Primates</taxon>
        <taxon>Haplorrhini</taxon>
        <taxon>Catarrhini</taxon>
        <taxon>Hominidae</taxon>
        <taxon>Homo</taxon>
    </lineage>
</organism>
<gene>
    <name evidence="5" type="primary">FREY1</name>
    <name type="synonym">C11orf94</name>
    <name type="synonym">FREY</name>
</gene>
<reference key="1">
    <citation type="journal article" date="2006" name="Nature">
        <title>Human chromosome 11 DNA sequence and analysis including novel gene identification.</title>
        <authorList>
            <person name="Taylor T.D."/>
            <person name="Noguchi H."/>
            <person name="Totoki Y."/>
            <person name="Toyoda A."/>
            <person name="Kuroki Y."/>
            <person name="Dewar K."/>
            <person name="Lloyd C."/>
            <person name="Itoh T."/>
            <person name="Takeda T."/>
            <person name="Kim D.-W."/>
            <person name="She X."/>
            <person name="Barlow K.F."/>
            <person name="Bloom T."/>
            <person name="Bruford E."/>
            <person name="Chang J.L."/>
            <person name="Cuomo C.A."/>
            <person name="Eichler E."/>
            <person name="FitzGerald M.G."/>
            <person name="Jaffe D.B."/>
            <person name="LaButti K."/>
            <person name="Nicol R."/>
            <person name="Park H.-S."/>
            <person name="Seaman C."/>
            <person name="Sougnez C."/>
            <person name="Yang X."/>
            <person name="Zimmer A.R."/>
            <person name="Zody M.C."/>
            <person name="Birren B.W."/>
            <person name="Nusbaum C."/>
            <person name="Fujiyama A."/>
            <person name="Hattori M."/>
            <person name="Rogers J."/>
            <person name="Lander E.S."/>
            <person name="Sakaki Y."/>
        </authorList>
    </citation>
    <scope>NUCLEOTIDE SEQUENCE [LARGE SCALE GENOMIC DNA]</scope>
</reference>
<reference key="2">
    <citation type="submission" date="2005-09" db="EMBL/GenBank/DDBJ databases">
        <authorList>
            <person name="Mural R.J."/>
            <person name="Istrail S."/>
            <person name="Sutton G.G."/>
            <person name="Florea L."/>
            <person name="Halpern A.L."/>
            <person name="Mobarry C.M."/>
            <person name="Lippert R."/>
            <person name="Walenz B."/>
            <person name="Shatkay H."/>
            <person name="Dew I."/>
            <person name="Miller J.R."/>
            <person name="Flanigan M.J."/>
            <person name="Edwards N.J."/>
            <person name="Bolanos R."/>
            <person name="Fasulo D."/>
            <person name="Halldorsson B.V."/>
            <person name="Hannenhalli S."/>
            <person name="Turner R."/>
            <person name="Yooseph S."/>
            <person name="Lu F."/>
            <person name="Nusskern D.R."/>
            <person name="Shue B.C."/>
            <person name="Zheng X.H."/>
            <person name="Zhong F."/>
            <person name="Delcher A.L."/>
            <person name="Huson D.H."/>
            <person name="Kravitz S.A."/>
            <person name="Mouchard L."/>
            <person name="Reinert K."/>
            <person name="Remington K.A."/>
            <person name="Clark A.G."/>
            <person name="Waterman M.S."/>
            <person name="Eichler E.E."/>
            <person name="Adams M.D."/>
            <person name="Hunkapiller M.W."/>
            <person name="Myers E.W."/>
            <person name="Venter J.C."/>
        </authorList>
    </citation>
    <scope>NUCLEOTIDE SEQUENCE [LARGE SCALE GENOMIC DNA]</scope>
</reference>
<name>FREY_HUMAN</name>
<evidence type="ECO:0000250" key="1">
    <source>
        <dbReference type="UniProtKB" id="Q8CF31"/>
    </source>
</evidence>
<evidence type="ECO:0000255" key="2"/>
<evidence type="ECO:0000256" key="3">
    <source>
        <dbReference type="SAM" id="MobiDB-lite"/>
    </source>
</evidence>
<evidence type="ECO:0000305" key="4"/>
<evidence type="ECO:0000312" key="5">
    <source>
        <dbReference type="HGNC" id="HGNC:37213"/>
    </source>
</evidence>
<dbReference type="EMBL" id="AC068385">
    <property type="status" value="NOT_ANNOTATED_CDS"/>
    <property type="molecule type" value="Genomic_DNA"/>
</dbReference>
<dbReference type="EMBL" id="CH471064">
    <property type="protein sequence ID" value="EAW68025.1"/>
    <property type="molecule type" value="Genomic_DNA"/>
</dbReference>
<dbReference type="CCDS" id="CCDS44577.1"/>
<dbReference type="RefSeq" id="NP_001073915.2">
    <property type="nucleotide sequence ID" value="NM_001080446.3"/>
</dbReference>
<dbReference type="FunCoup" id="C9JXX5">
    <property type="interactions" value="24"/>
</dbReference>
<dbReference type="STRING" id="9606.ENSP00000401498"/>
<dbReference type="iPTMnet" id="C9JXX5"/>
<dbReference type="PhosphoSitePlus" id="C9JXX5"/>
<dbReference type="BioMuta" id="C11orf94"/>
<dbReference type="PaxDb" id="9606-ENSP00000401498"/>
<dbReference type="PeptideAtlas" id="C9JXX5"/>
<dbReference type="Antibodypedia" id="71796">
    <property type="antibodies" value="7 antibodies from 6 providers"/>
</dbReference>
<dbReference type="DNASU" id="143678"/>
<dbReference type="Ensembl" id="ENST00000449465.2">
    <property type="protein sequence ID" value="ENSP00000401498.1"/>
    <property type="gene ID" value="ENSG00000234776.5"/>
</dbReference>
<dbReference type="GeneID" id="143678"/>
<dbReference type="KEGG" id="hsa:143678"/>
<dbReference type="MANE-Select" id="ENST00000449465.2">
    <property type="protein sequence ID" value="ENSP00000401498.1"/>
    <property type="RefSeq nucleotide sequence ID" value="NM_001080446.3"/>
    <property type="RefSeq protein sequence ID" value="NP_001073915.2"/>
</dbReference>
<dbReference type="UCSC" id="uc001nbs.5">
    <property type="organism name" value="human"/>
</dbReference>
<dbReference type="AGR" id="HGNC:37213"/>
<dbReference type="CTD" id="143678"/>
<dbReference type="DisGeNET" id="143678"/>
<dbReference type="GeneCards" id="FREY1"/>
<dbReference type="HGNC" id="HGNC:37213">
    <property type="gene designation" value="FREY1"/>
</dbReference>
<dbReference type="HPA" id="ENSG00000234776">
    <property type="expression patterns" value="Tissue enriched (testis)"/>
</dbReference>
<dbReference type="neXtProt" id="NX_C9JXX5"/>
<dbReference type="OpenTargets" id="ENSG00000234776"/>
<dbReference type="PharmGKB" id="PA165543255"/>
<dbReference type="VEuPathDB" id="HostDB:ENSG00000234776"/>
<dbReference type="eggNOG" id="ENOG502SCAR">
    <property type="taxonomic scope" value="Eukaryota"/>
</dbReference>
<dbReference type="GeneTree" id="ENSGT00390000018235"/>
<dbReference type="HOGENOM" id="CLU_2319619_0_0_1"/>
<dbReference type="InParanoid" id="C9JXX5"/>
<dbReference type="OMA" id="IRPKHPW"/>
<dbReference type="OrthoDB" id="9908355at2759"/>
<dbReference type="PAN-GO" id="C9JXX5">
    <property type="GO annotations" value="0 GO annotations based on evolutionary models"/>
</dbReference>
<dbReference type="PhylomeDB" id="C9JXX5"/>
<dbReference type="TreeFam" id="TF339805"/>
<dbReference type="PathwayCommons" id="C9JXX5"/>
<dbReference type="BioGRID-ORCS" id="143678">
    <property type="hits" value="9 hits in 1127 CRISPR screens"/>
</dbReference>
<dbReference type="GenomeRNAi" id="143678"/>
<dbReference type="Pharos" id="C9JXX5">
    <property type="development level" value="Tdark"/>
</dbReference>
<dbReference type="PRO" id="PR:C9JXX5"/>
<dbReference type="Proteomes" id="UP000005640">
    <property type="component" value="Chromosome 11"/>
</dbReference>
<dbReference type="RNAct" id="C9JXX5">
    <property type="molecule type" value="protein"/>
</dbReference>
<dbReference type="Bgee" id="ENSG00000234776">
    <property type="expression patterns" value="Expressed in male germ line stem cell (sensu Vertebrata) in testis and 99 other cell types or tissues"/>
</dbReference>
<dbReference type="GO" id="GO:0005789">
    <property type="term" value="C:endoplasmic reticulum membrane"/>
    <property type="evidence" value="ECO:0000250"/>
    <property type="project" value="UniProtKB"/>
</dbReference>
<dbReference type="GO" id="GO:0030674">
    <property type="term" value="F:protein-macromolecule adaptor activity"/>
    <property type="evidence" value="ECO:0000250"/>
    <property type="project" value="UniProtKB"/>
</dbReference>
<dbReference type="GO" id="GO:0007342">
    <property type="term" value="P:fusion of sperm to egg plasma membrane involved in single fertilization"/>
    <property type="evidence" value="ECO:0000250"/>
    <property type="project" value="UniProtKB"/>
</dbReference>
<dbReference type="GO" id="GO:0010467">
    <property type="term" value="P:gene expression"/>
    <property type="evidence" value="ECO:0007669"/>
    <property type="project" value="Ensembl"/>
</dbReference>
<dbReference type="GO" id="GO:0035437">
    <property type="term" value="P:maintenance of protein localization in endoplasmic reticulum"/>
    <property type="evidence" value="ECO:0000250"/>
    <property type="project" value="UniProtKB"/>
</dbReference>
<dbReference type="GO" id="GO:0006487">
    <property type="term" value="P:protein N-linked glycosylation"/>
    <property type="evidence" value="ECO:0007669"/>
    <property type="project" value="Ensembl"/>
</dbReference>
<dbReference type="GO" id="GO:0050821">
    <property type="term" value="P:protein stabilization"/>
    <property type="evidence" value="ECO:0007669"/>
    <property type="project" value="Ensembl"/>
</dbReference>
<dbReference type="GO" id="GO:0016567">
    <property type="term" value="P:protein ubiquitination"/>
    <property type="evidence" value="ECO:0007669"/>
    <property type="project" value="Ensembl"/>
</dbReference>
<dbReference type="GO" id="GO:0065003">
    <property type="term" value="P:protein-containing complex assembly"/>
    <property type="evidence" value="ECO:0007669"/>
    <property type="project" value="Ensembl"/>
</dbReference>
<dbReference type="GO" id="GO:0035036">
    <property type="term" value="P:sperm-egg recognition"/>
    <property type="evidence" value="ECO:0000250"/>
    <property type="project" value="UniProtKB"/>
</dbReference>
<dbReference type="GO" id="GO:0007286">
    <property type="term" value="P:spermatid development"/>
    <property type="evidence" value="ECO:0007669"/>
    <property type="project" value="Ensembl"/>
</dbReference>
<dbReference type="InterPro" id="IPR031748">
    <property type="entry name" value="Frey"/>
</dbReference>
<dbReference type="PANTHER" id="PTHR37872:SF1">
    <property type="entry name" value="PROTEIN FREY 1"/>
    <property type="match status" value="1"/>
</dbReference>
<dbReference type="PANTHER" id="PTHR37872">
    <property type="entry name" value="SIMILAR TO RIKEN CDNA 1700029I15"/>
    <property type="match status" value="1"/>
</dbReference>
<dbReference type="Pfam" id="PF15878">
    <property type="entry name" value="Frey"/>
    <property type="match status" value="1"/>
</dbReference>
<feature type="chain" id="PRO_0000394235" description="Protein Frey 1">
    <location>
        <begin position="1"/>
        <end position="98"/>
    </location>
</feature>
<feature type="transmembrane region" description="Helical" evidence="2">
    <location>
        <begin position="13"/>
        <end position="29"/>
    </location>
</feature>
<feature type="region of interest" description="Disordered" evidence="3">
    <location>
        <begin position="60"/>
        <end position="87"/>
    </location>
</feature>
<feature type="sequence variant" id="VAR_063154" description="In dbSNP:rs2271849.">
    <original>Q</original>
    <variation>H</variation>
    <location>
        <position position="80"/>
    </location>
</feature>
<protein>
    <recommendedName>
        <fullName evidence="4">Protein Frey 1</fullName>
    </recommendedName>
    <alternativeName>
        <fullName evidence="5">Frey regulator of sperm-oocyte fusion 1</fullName>
        <shortName>FREY1</shortName>
    </alternativeName>
</protein>
<keyword id="KW-0256">Endoplasmic reticulum</keyword>
<keyword id="KW-0472">Membrane</keyword>
<keyword id="KW-1185">Reference proteome</keyword>
<keyword id="KW-0812">Transmembrane</keyword>
<keyword id="KW-1133">Transmembrane helix</keyword>